<proteinExistence type="evidence at protein level"/>
<sequence length="264" mass="29052">MLRLLRLALAFYGRTADPAERQGPQQQGLPQGDTQLTTVQGVVTSFCGDYGMIDESIYFSSDVVTGNVPLKVGQKVNVVVEEDKPHYGLRAIKVDVVPRHLYGAGPSDSGTRVLIGCVTSINEDNIYISNSIYFSIAIVSEDFVPYKGDLLEVEYSTEPGISNIKATSVKPIRCIHTEEVCITSVHGRNGVIDYTIFFTLDSVKLPDGYVPQVDDIVNVVMVESIQFCFIWRAISITPVHKSSSGFQDDGGLGRPKRERRSQSI</sequence>
<evidence type="ECO:0000256" key="1">
    <source>
        <dbReference type="SAM" id="MobiDB-lite"/>
    </source>
</evidence>
<evidence type="ECO:0000269" key="2">
    <source>
    </source>
</evidence>
<evidence type="ECO:0000269" key="3">
    <source>
    </source>
</evidence>
<evidence type="ECO:0000303" key="4">
    <source>
    </source>
</evidence>
<evidence type="ECO:0000303" key="5">
    <source>
    </source>
</evidence>
<comment type="function">
    <text evidence="3">Plays a role in spermatogenesis, possibly acting in the regulation of the autophagy pathway.</text>
</comment>
<comment type="subunit">
    <text evidence="3">Interacts with GABARAP; this interaction may be important for GABARAP protein stability (PubMed:36481789). Isoform 1 interacts with LAMP2; this interaction may be important for LAMP2 protein stability (PubMed:36481789).</text>
</comment>
<comment type="interaction">
    <interactant intactId="EBI-6873363">
        <id>Q8WUE5</id>
    </interactant>
    <interactant intactId="EBI-8643161">
        <id>Q9NX04</id>
        <label>AIRIM</label>
    </interactant>
    <organismsDiffer>false</organismsDiffer>
    <experiments>3</experiments>
</comment>
<comment type="interaction">
    <interactant intactId="EBI-6873363">
        <id>Q8WUE5</id>
    </interactant>
    <interactant intactId="EBI-10229433">
        <id>Q13515</id>
        <label>BFSP2</label>
    </interactant>
    <organismsDiffer>false</organismsDiffer>
    <experiments>3</experiments>
</comment>
<comment type="interaction">
    <interactant intactId="EBI-6873363">
        <id>Q8WUE5</id>
    </interactant>
    <interactant intactId="EBI-739879">
        <id>Q53TS8</id>
        <label>C2CD6</label>
    </interactant>
    <organismsDiffer>false</organismsDiffer>
    <experiments>3</experiments>
</comment>
<comment type="interaction">
    <interactant intactId="EBI-6873363">
        <id>Q8WUE5</id>
    </interactant>
    <interactant intactId="EBI-10311131">
        <id>Q9NP86</id>
        <label>CABP5</label>
    </interactant>
    <organismsDiffer>false</organismsDiffer>
    <experiments>3</experiments>
</comment>
<comment type="interaction">
    <interactant intactId="EBI-6873363">
        <id>Q8WUE5</id>
    </interactant>
    <interactant intactId="EBI-7097057">
        <id>Q96FN4</id>
        <label>CPNE2</label>
    </interactant>
    <organismsDiffer>false</organismsDiffer>
    <experiments>5</experiments>
</comment>
<comment type="interaction">
    <interactant intactId="EBI-6873363">
        <id>Q8WUE5</id>
    </interactant>
    <interactant intactId="EBI-1055572">
        <id>P17661</id>
        <label>DES</label>
    </interactant>
    <organismsDiffer>false</organismsDiffer>
    <experiments>6</experiments>
</comment>
<comment type="interaction">
    <interactant intactId="EBI-6873363">
        <id>Q8WUE5</id>
    </interactant>
    <interactant intactId="EBI-6251402">
        <id>Q9UPT5-1</id>
        <label>EXOC7</label>
    </interactant>
    <organismsDiffer>false</organismsDiffer>
    <experiments>3</experiments>
</comment>
<comment type="interaction">
    <interactant intactId="EBI-6873363">
        <id>Q8WUE5</id>
    </interactant>
    <interactant intactId="EBI-12013806">
        <id>Q6NZ36-4</id>
        <label>FAAP20</label>
    </interactant>
    <organismsDiffer>false</organismsDiffer>
    <experiments>3</experiments>
</comment>
<comment type="interaction">
    <interactant intactId="EBI-6873363">
        <id>Q8WUE5</id>
    </interactant>
    <interactant intactId="EBI-744302">
        <id>P14136</id>
        <label>GFAP</label>
    </interactant>
    <organismsDiffer>false</organismsDiffer>
    <experiments>3</experiments>
</comment>
<comment type="interaction">
    <interactant intactId="EBI-6873363">
        <id>Q8WUE5</id>
    </interactant>
    <interactant intactId="EBI-11519926">
        <id>Q6PI77</id>
        <label>GPRASP3</label>
    </interactant>
    <organismsDiffer>false</organismsDiffer>
    <experiments>3</experiments>
</comment>
<comment type="interaction">
    <interactant intactId="EBI-6873363">
        <id>Q8WUE5</id>
    </interactant>
    <interactant intactId="EBI-2805604">
        <id>Q2KHM9</id>
        <label>KIAA0753</label>
    </interactant>
    <organismsDiffer>false</organismsDiffer>
    <experiments>3</experiments>
</comment>
<comment type="interaction">
    <interactant intactId="EBI-6873363">
        <id>Q8WUE5</id>
    </interactant>
    <interactant intactId="EBI-12076930">
        <id>Q6P597-3</id>
        <label>KLC3</label>
    </interactant>
    <organismsDiffer>false</organismsDiffer>
    <experiments>3</experiments>
</comment>
<comment type="interaction">
    <interactant intactId="EBI-6873363">
        <id>Q8WUE5</id>
    </interactant>
    <interactant intactId="EBI-739890">
        <id>Q9P2K6</id>
        <label>KLHL42</label>
    </interactant>
    <organismsDiffer>false</organismsDiffer>
    <experiments>3</experiments>
</comment>
<comment type="interaction">
    <interactant intactId="EBI-6873363">
        <id>Q8WUE5</id>
    </interactant>
    <interactant intactId="EBI-12351611">
        <id>Q16719-2</id>
        <label>KYNU</label>
    </interactant>
    <organismsDiffer>false</organismsDiffer>
    <experiments>3</experiments>
</comment>
<comment type="interaction">
    <interactant intactId="EBI-6873363">
        <id>Q8WUE5</id>
    </interactant>
    <interactant intactId="EBI-6268634">
        <id>Q5VWZ2</id>
        <label>LYPLAL1</label>
    </interactant>
    <organismsDiffer>false</organismsDiffer>
    <experiments>3</experiments>
</comment>
<comment type="interaction">
    <interactant intactId="EBI-6873363">
        <id>Q8WUE5</id>
    </interactant>
    <interactant intactId="EBI-11978579">
        <id>O95983-2</id>
        <label>MBD3</label>
    </interactant>
    <organismsDiffer>false</organismsDiffer>
    <experiments>3</experiments>
</comment>
<comment type="interaction">
    <interactant intactId="EBI-6873363">
        <id>Q8WUE5</id>
    </interactant>
    <interactant intactId="EBI-1104564">
        <id>Q9Y316</id>
        <label>MEMO1</label>
    </interactant>
    <organismsDiffer>false</organismsDiffer>
    <experiments>3</experiments>
</comment>
<comment type="interaction">
    <interactant intactId="EBI-6873363">
        <id>Q8WUE5</id>
    </interactant>
    <interactant intactId="EBI-16439278">
        <id>Q6FHY5</id>
        <label>MEOX2</label>
    </interactant>
    <organismsDiffer>false</organismsDiffer>
    <experiments>3</experiments>
</comment>
<comment type="interaction">
    <interactant intactId="EBI-6873363">
        <id>Q8WUE5</id>
    </interactant>
    <interactant intactId="EBI-10181968">
        <id>Q7Z4N8</id>
        <label>P4HA3</label>
    </interactant>
    <organismsDiffer>false</organismsDiffer>
    <experiments>3</experiments>
</comment>
<comment type="interaction">
    <interactant intactId="EBI-6873363">
        <id>Q8WUE5</id>
    </interactant>
    <interactant intactId="EBI-12859446">
        <id>P23759-2</id>
        <label>PAX7</label>
    </interactant>
    <organismsDiffer>false</organismsDiffer>
    <experiments>3</experiments>
</comment>
<comment type="interaction">
    <interactant intactId="EBI-6873363">
        <id>Q8WUE5</id>
    </interactant>
    <interactant intactId="EBI-10232538">
        <id>Q8WWB5</id>
        <label>PIH1D2</label>
    </interactant>
    <organismsDiffer>false</organismsDiffer>
    <experiments>3</experiments>
</comment>
<comment type="interaction">
    <interactant intactId="EBI-6873363">
        <id>Q8WUE5</id>
    </interactant>
    <interactant intactId="EBI-752074">
        <id>P41219</id>
        <label>PRPH</label>
    </interactant>
    <organismsDiffer>false</organismsDiffer>
    <experiments>3</experiments>
</comment>
<comment type="interaction">
    <interactant intactId="EBI-6873363">
        <id>Q8WUE5</id>
    </interactant>
    <interactant intactId="EBI-14067109">
        <id>Q96NU1</id>
        <label>SAMD11</label>
    </interactant>
    <organismsDiffer>false</organismsDiffer>
    <experiments>3</experiments>
</comment>
<comment type="interaction">
    <interactant intactId="EBI-6873363">
        <id>Q8WUE5</id>
    </interactant>
    <interactant intactId="EBI-79084">
        <id>Q92529</id>
        <label>SHC3</label>
    </interactant>
    <organismsDiffer>false</organismsDiffer>
    <experiments>3</experiments>
</comment>
<comment type="interaction">
    <interactant intactId="EBI-6873363">
        <id>Q8WUE5</id>
    </interactant>
    <interactant intactId="EBI-747719">
        <id>Q96H20</id>
        <label>SNF8</label>
    </interactant>
    <organismsDiffer>false</organismsDiffer>
    <experiments>3</experiments>
</comment>
<comment type="interaction">
    <interactant intactId="EBI-6873363">
        <id>Q8WUE5</id>
    </interactant>
    <interactant intactId="EBI-742688">
        <id>Q9NZD8</id>
        <label>SPG21</label>
    </interactant>
    <organismsDiffer>false</organismsDiffer>
    <experiments>3</experiments>
</comment>
<comment type="interaction">
    <interactant intactId="EBI-6873363">
        <id>Q8WUE5</id>
    </interactant>
    <interactant intactId="EBI-1105213">
        <id>Q9UBB9</id>
        <label>TFIP11</label>
    </interactant>
    <organismsDiffer>false</organismsDiffer>
    <experiments>3</experiments>
</comment>
<comment type="interaction">
    <interactant intactId="EBI-6873363">
        <id>Q8WUE5</id>
    </interactant>
    <interactant intactId="EBI-11741437">
        <id>Q08117-2</id>
        <label>TLE5</label>
    </interactant>
    <organismsDiffer>false</organismsDiffer>
    <experiments>3</experiments>
</comment>
<comment type="interaction">
    <interactant intactId="EBI-6873363">
        <id>Q8WUE5</id>
    </interactant>
    <interactant intactId="EBI-6116822">
        <id>Q8N3L3</id>
        <label>TXLNB</label>
    </interactant>
    <organismsDiffer>false</organismsDiffer>
    <experiments>4</experiments>
</comment>
<comment type="interaction">
    <interactant intactId="EBI-6873363">
        <id>Q8WUE5</id>
    </interactant>
    <interactant intactId="EBI-353844">
        <id>P08670</id>
        <label>VIM</label>
    </interactant>
    <organismsDiffer>false</organismsDiffer>
    <experiments>3</experiments>
</comment>
<comment type="interaction">
    <interactant intactId="EBI-6873363">
        <id>Q8WUE5</id>
    </interactant>
    <interactant intactId="EBI-12272076">
        <id>Q13360-2</id>
        <label>ZNF177</label>
    </interactant>
    <organismsDiffer>false</organismsDiffer>
    <experiments>3</experiments>
</comment>
<comment type="subcellular location">
    <subcellularLocation>
        <location evidence="3">Cytoplasm</location>
    </subcellularLocation>
    <subcellularLocation>
        <location evidence="3">Cytoplasmic vesicle</location>
        <location evidence="3">Secretory vesicle</location>
        <location evidence="3">Acrosome</location>
    </subcellularLocation>
    <subcellularLocation>
        <location evidence="3">Cell projection</location>
        <location evidence="3">Cilium</location>
        <location evidence="3">Flagellum</location>
    </subcellularLocation>
    <text evidence="3">Mainly observed in the cytoplasm of spermatocyte and spermatogonia, and also found in acrosome or flagellum in early and late spermatids.</text>
</comment>
<comment type="alternative products">
    <event type="alternative splicing"/>
    <isoform>
        <id>Q8WUE5-1</id>
        <name>1</name>
        <name evidence="5">BJ-HCC-20A</name>
        <sequence type="displayed"/>
    </isoform>
    <isoform>
        <id>Q8WUE5-2</id>
        <name>2</name>
        <name evidence="5">BJ-HCC-20B</name>
        <sequence type="described" ref="VSP_014465"/>
    </isoform>
</comment>
<comment type="tissue specificity">
    <text evidence="2 3">Testis-specific (PubMed:15499386). Expressed in spermatozoa (at protein level) (PubMed:36481789).</text>
</comment>
<comment type="disease" evidence="3">
    <disease id="DI-06634">
        <name>Spermatogenic failure, X-linked, 7</name>
        <acronym>SPGFX7</acronym>
        <description>A male infertility disorder characterized by a significant reduction in sperm count and motility, and aberrant sperm morphology with abnormalities of the head and flagella. Patient sperm show insufficient individualization, excessive residual cytoplasm, and defects in acrosome development.</description>
        <dbReference type="MIM" id="301106"/>
    </disease>
    <text>The disease is caused by variants affecting the gene represented in this entry.</text>
</comment>
<name>CT55_HUMAN</name>
<gene>
    <name type="primary">CT55</name>
    <name type="synonym">CXorf48</name>
</gene>
<reference key="1">
    <citation type="journal article" date="2004" name="Biochem. Cell Biol.">
        <title>BJ-HCC-20, a potential novel cancer-testis antigen.</title>
        <authorList>
            <person name="Dong X.Y."/>
            <person name="Li Y.Y."/>
            <person name="Yang X.A."/>
            <person name="Chen W.F."/>
        </authorList>
    </citation>
    <scope>NUCLEOTIDE SEQUENCE [MRNA] (ISOFORMS 1 AND 2)</scope>
    <scope>TISSUE SPECIFICITY</scope>
</reference>
<reference key="2">
    <citation type="journal article" date="2004" name="Nat. Genet.">
        <title>Complete sequencing and characterization of 21,243 full-length human cDNAs.</title>
        <authorList>
            <person name="Ota T."/>
            <person name="Suzuki Y."/>
            <person name="Nishikawa T."/>
            <person name="Otsuki T."/>
            <person name="Sugiyama T."/>
            <person name="Irie R."/>
            <person name="Wakamatsu A."/>
            <person name="Hayashi K."/>
            <person name="Sato H."/>
            <person name="Nagai K."/>
            <person name="Kimura K."/>
            <person name="Makita H."/>
            <person name="Sekine M."/>
            <person name="Obayashi M."/>
            <person name="Nishi T."/>
            <person name="Shibahara T."/>
            <person name="Tanaka T."/>
            <person name="Ishii S."/>
            <person name="Yamamoto J."/>
            <person name="Saito K."/>
            <person name="Kawai Y."/>
            <person name="Isono Y."/>
            <person name="Nakamura Y."/>
            <person name="Nagahari K."/>
            <person name="Murakami K."/>
            <person name="Yasuda T."/>
            <person name="Iwayanagi T."/>
            <person name="Wagatsuma M."/>
            <person name="Shiratori A."/>
            <person name="Sudo H."/>
            <person name="Hosoiri T."/>
            <person name="Kaku Y."/>
            <person name="Kodaira H."/>
            <person name="Kondo H."/>
            <person name="Sugawara M."/>
            <person name="Takahashi M."/>
            <person name="Kanda K."/>
            <person name="Yokoi T."/>
            <person name="Furuya T."/>
            <person name="Kikkawa E."/>
            <person name="Omura Y."/>
            <person name="Abe K."/>
            <person name="Kamihara K."/>
            <person name="Katsuta N."/>
            <person name="Sato K."/>
            <person name="Tanikawa M."/>
            <person name="Yamazaki M."/>
            <person name="Ninomiya K."/>
            <person name="Ishibashi T."/>
            <person name="Yamashita H."/>
            <person name="Murakawa K."/>
            <person name="Fujimori K."/>
            <person name="Tanai H."/>
            <person name="Kimata M."/>
            <person name="Watanabe M."/>
            <person name="Hiraoka S."/>
            <person name="Chiba Y."/>
            <person name="Ishida S."/>
            <person name="Ono Y."/>
            <person name="Takiguchi S."/>
            <person name="Watanabe S."/>
            <person name="Yosida M."/>
            <person name="Hotuta T."/>
            <person name="Kusano J."/>
            <person name="Kanehori K."/>
            <person name="Takahashi-Fujii A."/>
            <person name="Hara H."/>
            <person name="Tanase T.-O."/>
            <person name="Nomura Y."/>
            <person name="Togiya S."/>
            <person name="Komai F."/>
            <person name="Hara R."/>
            <person name="Takeuchi K."/>
            <person name="Arita M."/>
            <person name="Imose N."/>
            <person name="Musashino K."/>
            <person name="Yuuki H."/>
            <person name="Oshima A."/>
            <person name="Sasaki N."/>
            <person name="Aotsuka S."/>
            <person name="Yoshikawa Y."/>
            <person name="Matsunawa H."/>
            <person name="Ichihara T."/>
            <person name="Shiohata N."/>
            <person name="Sano S."/>
            <person name="Moriya S."/>
            <person name="Momiyama H."/>
            <person name="Satoh N."/>
            <person name="Takami S."/>
            <person name="Terashima Y."/>
            <person name="Suzuki O."/>
            <person name="Nakagawa S."/>
            <person name="Senoh A."/>
            <person name="Mizoguchi H."/>
            <person name="Goto Y."/>
            <person name="Shimizu F."/>
            <person name="Wakebe H."/>
            <person name="Hishigaki H."/>
            <person name="Watanabe T."/>
            <person name="Sugiyama A."/>
            <person name="Takemoto M."/>
            <person name="Kawakami B."/>
            <person name="Yamazaki M."/>
            <person name="Watanabe K."/>
            <person name="Kumagai A."/>
            <person name="Itakura S."/>
            <person name="Fukuzumi Y."/>
            <person name="Fujimori Y."/>
            <person name="Komiyama M."/>
            <person name="Tashiro H."/>
            <person name="Tanigami A."/>
            <person name="Fujiwara T."/>
            <person name="Ono T."/>
            <person name="Yamada K."/>
            <person name="Fujii Y."/>
            <person name="Ozaki K."/>
            <person name="Hirao M."/>
            <person name="Ohmori Y."/>
            <person name="Kawabata A."/>
            <person name="Hikiji T."/>
            <person name="Kobatake N."/>
            <person name="Inagaki H."/>
            <person name="Ikema Y."/>
            <person name="Okamoto S."/>
            <person name="Okitani R."/>
            <person name="Kawakami T."/>
            <person name="Noguchi S."/>
            <person name="Itoh T."/>
            <person name="Shigeta K."/>
            <person name="Senba T."/>
            <person name="Matsumura K."/>
            <person name="Nakajima Y."/>
            <person name="Mizuno T."/>
            <person name="Morinaga M."/>
            <person name="Sasaki M."/>
            <person name="Togashi T."/>
            <person name="Oyama M."/>
            <person name="Hata H."/>
            <person name="Watanabe M."/>
            <person name="Komatsu T."/>
            <person name="Mizushima-Sugano J."/>
            <person name="Satoh T."/>
            <person name="Shirai Y."/>
            <person name="Takahashi Y."/>
            <person name="Nakagawa K."/>
            <person name="Okumura K."/>
            <person name="Nagase T."/>
            <person name="Nomura N."/>
            <person name="Kikuchi H."/>
            <person name="Masuho Y."/>
            <person name="Yamashita R."/>
            <person name="Nakai K."/>
            <person name="Yada T."/>
            <person name="Nakamura Y."/>
            <person name="Ohara O."/>
            <person name="Isogai T."/>
            <person name="Sugano S."/>
        </authorList>
    </citation>
    <scope>NUCLEOTIDE SEQUENCE [LARGE SCALE MRNA] (ISOFORM 2)</scope>
</reference>
<reference key="3">
    <citation type="journal article" date="2005" name="Nature">
        <title>The DNA sequence of the human X chromosome.</title>
        <authorList>
            <person name="Ross M.T."/>
            <person name="Grafham D.V."/>
            <person name="Coffey A.J."/>
            <person name="Scherer S."/>
            <person name="McLay K."/>
            <person name="Muzny D."/>
            <person name="Platzer M."/>
            <person name="Howell G.R."/>
            <person name="Burrows C."/>
            <person name="Bird C.P."/>
            <person name="Frankish A."/>
            <person name="Lovell F.L."/>
            <person name="Howe K.L."/>
            <person name="Ashurst J.L."/>
            <person name="Fulton R.S."/>
            <person name="Sudbrak R."/>
            <person name="Wen G."/>
            <person name="Jones M.C."/>
            <person name="Hurles M.E."/>
            <person name="Andrews T.D."/>
            <person name="Scott C.E."/>
            <person name="Searle S."/>
            <person name="Ramser J."/>
            <person name="Whittaker A."/>
            <person name="Deadman R."/>
            <person name="Carter N.P."/>
            <person name="Hunt S.E."/>
            <person name="Chen R."/>
            <person name="Cree A."/>
            <person name="Gunaratne P."/>
            <person name="Havlak P."/>
            <person name="Hodgson A."/>
            <person name="Metzker M.L."/>
            <person name="Richards S."/>
            <person name="Scott G."/>
            <person name="Steffen D."/>
            <person name="Sodergren E."/>
            <person name="Wheeler D.A."/>
            <person name="Worley K.C."/>
            <person name="Ainscough R."/>
            <person name="Ambrose K.D."/>
            <person name="Ansari-Lari M.A."/>
            <person name="Aradhya S."/>
            <person name="Ashwell R.I."/>
            <person name="Babbage A.K."/>
            <person name="Bagguley C.L."/>
            <person name="Ballabio A."/>
            <person name="Banerjee R."/>
            <person name="Barker G.E."/>
            <person name="Barlow K.F."/>
            <person name="Barrett I.P."/>
            <person name="Bates K.N."/>
            <person name="Beare D.M."/>
            <person name="Beasley H."/>
            <person name="Beasley O."/>
            <person name="Beck A."/>
            <person name="Bethel G."/>
            <person name="Blechschmidt K."/>
            <person name="Brady N."/>
            <person name="Bray-Allen S."/>
            <person name="Bridgeman A.M."/>
            <person name="Brown A.J."/>
            <person name="Brown M.J."/>
            <person name="Bonnin D."/>
            <person name="Bruford E.A."/>
            <person name="Buhay C."/>
            <person name="Burch P."/>
            <person name="Burford D."/>
            <person name="Burgess J."/>
            <person name="Burrill W."/>
            <person name="Burton J."/>
            <person name="Bye J.M."/>
            <person name="Carder C."/>
            <person name="Carrel L."/>
            <person name="Chako J."/>
            <person name="Chapman J.C."/>
            <person name="Chavez D."/>
            <person name="Chen E."/>
            <person name="Chen G."/>
            <person name="Chen Y."/>
            <person name="Chen Z."/>
            <person name="Chinault C."/>
            <person name="Ciccodicola A."/>
            <person name="Clark S.Y."/>
            <person name="Clarke G."/>
            <person name="Clee C.M."/>
            <person name="Clegg S."/>
            <person name="Clerc-Blankenburg K."/>
            <person name="Clifford K."/>
            <person name="Cobley V."/>
            <person name="Cole C.G."/>
            <person name="Conquer J.S."/>
            <person name="Corby N."/>
            <person name="Connor R.E."/>
            <person name="David R."/>
            <person name="Davies J."/>
            <person name="Davis C."/>
            <person name="Davis J."/>
            <person name="Delgado O."/>
            <person name="Deshazo D."/>
            <person name="Dhami P."/>
            <person name="Ding Y."/>
            <person name="Dinh H."/>
            <person name="Dodsworth S."/>
            <person name="Draper H."/>
            <person name="Dugan-Rocha S."/>
            <person name="Dunham A."/>
            <person name="Dunn M."/>
            <person name="Durbin K.J."/>
            <person name="Dutta I."/>
            <person name="Eades T."/>
            <person name="Ellwood M."/>
            <person name="Emery-Cohen A."/>
            <person name="Errington H."/>
            <person name="Evans K.L."/>
            <person name="Faulkner L."/>
            <person name="Francis F."/>
            <person name="Frankland J."/>
            <person name="Fraser A.E."/>
            <person name="Galgoczy P."/>
            <person name="Gilbert J."/>
            <person name="Gill R."/>
            <person name="Gloeckner G."/>
            <person name="Gregory S.G."/>
            <person name="Gribble S."/>
            <person name="Griffiths C."/>
            <person name="Grocock R."/>
            <person name="Gu Y."/>
            <person name="Gwilliam R."/>
            <person name="Hamilton C."/>
            <person name="Hart E.A."/>
            <person name="Hawes A."/>
            <person name="Heath P.D."/>
            <person name="Heitmann K."/>
            <person name="Hennig S."/>
            <person name="Hernandez J."/>
            <person name="Hinzmann B."/>
            <person name="Ho S."/>
            <person name="Hoffs M."/>
            <person name="Howden P.J."/>
            <person name="Huckle E.J."/>
            <person name="Hume J."/>
            <person name="Hunt P.J."/>
            <person name="Hunt A.R."/>
            <person name="Isherwood J."/>
            <person name="Jacob L."/>
            <person name="Johnson D."/>
            <person name="Jones S."/>
            <person name="de Jong P.J."/>
            <person name="Joseph S.S."/>
            <person name="Keenan S."/>
            <person name="Kelly S."/>
            <person name="Kershaw J.K."/>
            <person name="Khan Z."/>
            <person name="Kioschis P."/>
            <person name="Klages S."/>
            <person name="Knights A.J."/>
            <person name="Kosiura A."/>
            <person name="Kovar-Smith C."/>
            <person name="Laird G.K."/>
            <person name="Langford C."/>
            <person name="Lawlor S."/>
            <person name="Leversha M."/>
            <person name="Lewis L."/>
            <person name="Liu W."/>
            <person name="Lloyd C."/>
            <person name="Lloyd D.M."/>
            <person name="Loulseged H."/>
            <person name="Loveland J.E."/>
            <person name="Lovell J.D."/>
            <person name="Lozado R."/>
            <person name="Lu J."/>
            <person name="Lyne R."/>
            <person name="Ma J."/>
            <person name="Maheshwari M."/>
            <person name="Matthews L.H."/>
            <person name="McDowall J."/>
            <person name="McLaren S."/>
            <person name="McMurray A."/>
            <person name="Meidl P."/>
            <person name="Meitinger T."/>
            <person name="Milne S."/>
            <person name="Miner G."/>
            <person name="Mistry S.L."/>
            <person name="Morgan M."/>
            <person name="Morris S."/>
            <person name="Mueller I."/>
            <person name="Mullikin J.C."/>
            <person name="Nguyen N."/>
            <person name="Nordsiek G."/>
            <person name="Nyakatura G."/>
            <person name="O'dell C.N."/>
            <person name="Okwuonu G."/>
            <person name="Palmer S."/>
            <person name="Pandian R."/>
            <person name="Parker D."/>
            <person name="Parrish J."/>
            <person name="Pasternak S."/>
            <person name="Patel D."/>
            <person name="Pearce A.V."/>
            <person name="Pearson D.M."/>
            <person name="Pelan S.E."/>
            <person name="Perez L."/>
            <person name="Porter K.M."/>
            <person name="Ramsey Y."/>
            <person name="Reichwald K."/>
            <person name="Rhodes S."/>
            <person name="Ridler K.A."/>
            <person name="Schlessinger D."/>
            <person name="Schueler M.G."/>
            <person name="Sehra H.K."/>
            <person name="Shaw-Smith C."/>
            <person name="Shen H."/>
            <person name="Sheridan E.M."/>
            <person name="Shownkeen R."/>
            <person name="Skuce C.D."/>
            <person name="Smith M.L."/>
            <person name="Sotheran E.C."/>
            <person name="Steingruber H.E."/>
            <person name="Steward C.A."/>
            <person name="Storey R."/>
            <person name="Swann R.M."/>
            <person name="Swarbreck D."/>
            <person name="Tabor P.E."/>
            <person name="Taudien S."/>
            <person name="Taylor T."/>
            <person name="Teague B."/>
            <person name="Thomas K."/>
            <person name="Thorpe A."/>
            <person name="Timms K."/>
            <person name="Tracey A."/>
            <person name="Trevanion S."/>
            <person name="Tromans A.C."/>
            <person name="d'Urso M."/>
            <person name="Verduzco D."/>
            <person name="Villasana D."/>
            <person name="Waldron L."/>
            <person name="Wall M."/>
            <person name="Wang Q."/>
            <person name="Warren J."/>
            <person name="Warry G.L."/>
            <person name="Wei X."/>
            <person name="West A."/>
            <person name="Whitehead S.L."/>
            <person name="Whiteley M.N."/>
            <person name="Wilkinson J.E."/>
            <person name="Willey D.L."/>
            <person name="Williams G."/>
            <person name="Williams L."/>
            <person name="Williamson A."/>
            <person name="Williamson H."/>
            <person name="Wilming L."/>
            <person name="Woodmansey R.L."/>
            <person name="Wray P.W."/>
            <person name="Yen J."/>
            <person name="Zhang J."/>
            <person name="Zhou J."/>
            <person name="Zoghbi H."/>
            <person name="Zorilla S."/>
            <person name="Buck D."/>
            <person name="Reinhardt R."/>
            <person name="Poustka A."/>
            <person name="Rosenthal A."/>
            <person name="Lehrach H."/>
            <person name="Meindl A."/>
            <person name="Minx P.J."/>
            <person name="Hillier L.W."/>
            <person name="Willard H.F."/>
            <person name="Wilson R.K."/>
            <person name="Waterston R.H."/>
            <person name="Rice C.M."/>
            <person name="Vaudin M."/>
            <person name="Coulson A."/>
            <person name="Nelson D.L."/>
            <person name="Weinstock G."/>
            <person name="Sulston J.E."/>
            <person name="Durbin R.M."/>
            <person name="Hubbard T."/>
            <person name="Gibbs R.A."/>
            <person name="Beck S."/>
            <person name="Rogers J."/>
            <person name="Bentley D.R."/>
        </authorList>
    </citation>
    <scope>NUCLEOTIDE SEQUENCE [LARGE SCALE GENOMIC DNA]</scope>
</reference>
<reference key="4">
    <citation type="journal article" date="2004" name="Genome Res.">
        <title>The status, quality, and expansion of the NIH full-length cDNA project: the Mammalian Gene Collection (MGC).</title>
        <authorList>
            <consortium name="The MGC Project Team"/>
        </authorList>
    </citation>
    <scope>NUCLEOTIDE SEQUENCE [LARGE SCALE MRNA] (ISOFORM 1)</scope>
    <source>
        <tissue>Lung</tissue>
    </source>
</reference>
<reference key="5">
    <citation type="journal article" date="2023" name="Cell Death Differ.">
        <title>Deficiency of cancer/testis antigen gene CT55 causes male infertility in humans and mice.</title>
        <authorList>
            <person name="Zhang G."/>
            <person name="Jiang C."/>
            <person name="Yang Y."/>
            <person name="Wang Y."/>
            <person name="Zhou H."/>
            <person name="Dai S."/>
            <person name="Liu M."/>
            <person name="Yang Y."/>
            <person name="Yang L."/>
            <person name="Shen Q."/>
            <person name="Zhang T."/>
            <person name="Zhang X."/>
            <person name="Yang Y."/>
            <person name="Shen Y."/>
        </authorList>
    </citation>
    <scope>INVOLVEMENT IN SPGFX7</scope>
    <scope>VARIANT SPGFX7 155-TYR--ILE-264 DEL</scope>
    <scope>CHARACTERIZATION OF VARIANT SPGFX7 155-TYR--ILE-264 DEL</scope>
    <scope>FUNCTION</scope>
    <scope>INTERACTION WITH GABARAP AND LAMP2</scope>
    <scope>SUBCELLULAR LOCATION</scope>
    <scope>TISSUE SPECIFICITY</scope>
</reference>
<keyword id="KW-0025">Alternative splicing</keyword>
<keyword id="KW-0966">Cell projection</keyword>
<keyword id="KW-0969">Cilium</keyword>
<keyword id="KW-0963">Cytoplasm</keyword>
<keyword id="KW-0968">Cytoplasmic vesicle</keyword>
<keyword id="KW-0217">Developmental protein</keyword>
<keyword id="KW-0225">Disease variant</keyword>
<keyword id="KW-0282">Flagellum</keyword>
<keyword id="KW-1267">Proteomics identification</keyword>
<keyword id="KW-1185">Reference proteome</keyword>
<protein>
    <recommendedName>
        <fullName>Cancer/testis antigen 55</fullName>
    </recommendedName>
    <alternativeName>
        <fullName evidence="5">Tumor antigen BJ-HCC-20</fullName>
    </alternativeName>
</protein>
<accession>Q8WUE5</accession>
<accession>Q9NWY8</accession>
<feature type="chain" id="PRO_0000079739" description="Cancer/testis antigen 55">
    <location>
        <begin position="1"/>
        <end position="264"/>
    </location>
</feature>
<feature type="region of interest" description="Disordered" evidence="1">
    <location>
        <begin position="242"/>
        <end position="264"/>
    </location>
</feature>
<feature type="compositionally biased region" description="Basic residues" evidence="1">
    <location>
        <begin position="254"/>
        <end position="264"/>
    </location>
</feature>
<feature type="splice variant" id="VSP_014465" description="In isoform 2." evidence="4 5">
    <location>
        <begin position="243"/>
        <end position="264"/>
    </location>
</feature>
<feature type="sequence variant" id="VAR_088387" description="In SPGFX7; protein undetectable in patient spermatozoa." evidence="3">
    <location>
        <begin position="155"/>
        <end position="264"/>
    </location>
</feature>
<dbReference type="EMBL" id="AY352211">
    <property type="protein sequence ID" value="AAQ90022.1"/>
    <property type="molecule type" value="mRNA"/>
</dbReference>
<dbReference type="EMBL" id="AF520814">
    <property type="protein sequence ID" value="AAP47205.1"/>
    <property type="molecule type" value="mRNA"/>
</dbReference>
<dbReference type="EMBL" id="AK000534">
    <property type="protein sequence ID" value="BAA91237.1"/>
    <property type="molecule type" value="mRNA"/>
</dbReference>
<dbReference type="EMBL" id="AL670455">
    <property type="protein sequence ID" value="CAI41607.1"/>
    <property type="molecule type" value="Genomic_DNA"/>
</dbReference>
<dbReference type="EMBL" id="AL670455">
    <property type="protein sequence ID" value="CAI41608.1"/>
    <property type="molecule type" value="Genomic_DNA"/>
</dbReference>
<dbReference type="EMBL" id="BC020662">
    <property type="protein sequence ID" value="AAH20662.1"/>
    <property type="molecule type" value="mRNA"/>
</dbReference>
<dbReference type="CCDS" id="CCDS14647.1">
    <molecule id="Q8WUE5-2"/>
</dbReference>
<dbReference type="CCDS" id="CCDS35400.1">
    <molecule id="Q8WUE5-1"/>
</dbReference>
<dbReference type="RefSeq" id="NP_001026875.1">
    <molecule id="Q8WUE5-1"/>
    <property type="nucleotide sequence ID" value="NM_001031705.3"/>
</dbReference>
<dbReference type="RefSeq" id="NP_060333.1">
    <molecule id="Q8WUE5-2"/>
    <property type="nucleotide sequence ID" value="NM_017863.2"/>
</dbReference>
<dbReference type="SMR" id="Q8WUE5"/>
<dbReference type="BioGRID" id="120304">
    <property type="interactions" value="51"/>
</dbReference>
<dbReference type="FunCoup" id="Q8WUE5">
    <property type="interactions" value="18"/>
</dbReference>
<dbReference type="IntAct" id="Q8WUE5">
    <property type="interactions" value="48"/>
</dbReference>
<dbReference type="MINT" id="Q8WUE5"/>
<dbReference type="STRING" id="9606.ENSP00000276241"/>
<dbReference type="iPTMnet" id="Q8WUE5"/>
<dbReference type="PhosphoSitePlus" id="Q8WUE5"/>
<dbReference type="BioMuta" id="CT55"/>
<dbReference type="DMDM" id="68565599"/>
<dbReference type="jPOST" id="Q8WUE5"/>
<dbReference type="MassIVE" id="Q8WUE5"/>
<dbReference type="PaxDb" id="9606-ENSP00000276241"/>
<dbReference type="PeptideAtlas" id="Q8WUE5"/>
<dbReference type="ProteomicsDB" id="74663">
    <molecule id="Q8WUE5-1"/>
</dbReference>
<dbReference type="ProteomicsDB" id="74664">
    <molecule id="Q8WUE5-2"/>
</dbReference>
<dbReference type="Pumba" id="Q8WUE5"/>
<dbReference type="Antibodypedia" id="30340">
    <property type="antibodies" value="23 antibodies from 10 providers"/>
</dbReference>
<dbReference type="DNASU" id="54967"/>
<dbReference type="Ensembl" id="ENST00000276241.11">
    <molecule id="Q8WUE5-1"/>
    <property type="protein sequence ID" value="ENSP00000276241.6"/>
    <property type="gene ID" value="ENSG00000169551.13"/>
</dbReference>
<dbReference type="Ensembl" id="ENST00000344129.2">
    <molecule id="Q8WUE5-2"/>
    <property type="protein sequence ID" value="ENSP00000343893.2"/>
    <property type="gene ID" value="ENSG00000169551.13"/>
</dbReference>
<dbReference type="GeneID" id="54967"/>
<dbReference type="KEGG" id="hsa:54967"/>
<dbReference type="MANE-Select" id="ENST00000276241.11">
    <property type="protein sequence ID" value="ENSP00000276241.6"/>
    <property type="RefSeq nucleotide sequence ID" value="NM_001031705.3"/>
    <property type="RefSeq protein sequence ID" value="NP_001026875.1"/>
</dbReference>
<dbReference type="UCSC" id="uc004eyk.2">
    <molecule id="Q8WUE5-1"/>
    <property type="organism name" value="human"/>
</dbReference>
<dbReference type="AGR" id="HGNC:26047"/>
<dbReference type="CTD" id="54967"/>
<dbReference type="DisGeNET" id="54967"/>
<dbReference type="GeneCards" id="CT55"/>
<dbReference type="HGNC" id="HGNC:26047">
    <property type="gene designation" value="CT55"/>
</dbReference>
<dbReference type="HPA" id="ENSG00000169551">
    <property type="expression patterns" value="Tissue enriched (testis)"/>
</dbReference>
<dbReference type="MalaCards" id="CT55"/>
<dbReference type="MIM" id="301105">
    <property type="type" value="gene"/>
</dbReference>
<dbReference type="MIM" id="301106">
    <property type="type" value="phenotype"/>
</dbReference>
<dbReference type="neXtProt" id="NX_Q8WUE5"/>
<dbReference type="Orphanet" id="399805">
    <property type="disease" value="Male infertility with azoospermia or oligozoospermia due to single gene mutation"/>
</dbReference>
<dbReference type="PharmGKB" id="PA134977669"/>
<dbReference type="VEuPathDB" id="HostDB:ENSG00000169551"/>
<dbReference type="eggNOG" id="KOG1804">
    <property type="taxonomic scope" value="Eukaryota"/>
</dbReference>
<dbReference type="GeneTree" id="ENSGT00940000163821"/>
<dbReference type="HOGENOM" id="CLU_1165540_0_0_1"/>
<dbReference type="InParanoid" id="Q8WUE5"/>
<dbReference type="OMA" id="IHAEEVC"/>
<dbReference type="OrthoDB" id="9573766at2759"/>
<dbReference type="PAN-GO" id="Q8WUE5">
    <property type="GO annotations" value="0 GO annotations based on evolutionary models"/>
</dbReference>
<dbReference type="PhylomeDB" id="Q8WUE5"/>
<dbReference type="TreeFam" id="TF338795"/>
<dbReference type="PathwayCommons" id="Q8WUE5"/>
<dbReference type="SignaLink" id="Q8WUE5"/>
<dbReference type="BioGRID-ORCS" id="54967">
    <property type="hits" value="14 hits in 759 CRISPR screens"/>
</dbReference>
<dbReference type="GenomeRNAi" id="54967"/>
<dbReference type="Pharos" id="Q8WUE5">
    <property type="development level" value="Tdark"/>
</dbReference>
<dbReference type="PRO" id="PR:Q8WUE5"/>
<dbReference type="Proteomes" id="UP000005640">
    <property type="component" value="Chromosome X"/>
</dbReference>
<dbReference type="RNAct" id="Q8WUE5">
    <property type="molecule type" value="protein"/>
</dbReference>
<dbReference type="Bgee" id="ENSG00000169551">
    <property type="expression patterns" value="Expressed in primordial germ cell in gonad and 47 other cell types or tissues"/>
</dbReference>
<dbReference type="GO" id="GO:0001669">
    <property type="term" value="C:acrosomal vesicle"/>
    <property type="evidence" value="ECO:0000314"/>
    <property type="project" value="UniProtKB"/>
</dbReference>
<dbReference type="GO" id="GO:0005737">
    <property type="term" value="C:cytoplasm"/>
    <property type="evidence" value="ECO:0000314"/>
    <property type="project" value="UniProtKB"/>
</dbReference>
<dbReference type="GO" id="GO:0036126">
    <property type="term" value="C:sperm flagellum"/>
    <property type="evidence" value="ECO:0000314"/>
    <property type="project" value="UniProtKB"/>
</dbReference>
<dbReference type="GO" id="GO:0007283">
    <property type="term" value="P:spermatogenesis"/>
    <property type="evidence" value="ECO:0000315"/>
    <property type="project" value="UniProtKB"/>
</dbReference>
<dbReference type="InterPro" id="IPR012340">
    <property type="entry name" value="NA-bd_OB-fold"/>
</dbReference>
<dbReference type="InterPro" id="IPR025223">
    <property type="entry name" value="S1-like_RNA-bd_dom"/>
</dbReference>
<dbReference type="PANTHER" id="PTHR45418">
    <property type="entry name" value="CANCER/TESTIS ANTIGEN 55"/>
    <property type="match status" value="1"/>
</dbReference>
<dbReference type="PANTHER" id="PTHR45418:SF1">
    <property type="entry name" value="CANCER_TESTIS ANTIGEN 55"/>
    <property type="match status" value="1"/>
</dbReference>
<dbReference type="Pfam" id="PF14444">
    <property type="entry name" value="S1-like"/>
    <property type="match status" value="1"/>
</dbReference>
<dbReference type="SUPFAM" id="SSF50249">
    <property type="entry name" value="Nucleic acid-binding proteins"/>
    <property type="match status" value="1"/>
</dbReference>
<organism>
    <name type="scientific">Homo sapiens</name>
    <name type="common">Human</name>
    <dbReference type="NCBI Taxonomy" id="9606"/>
    <lineage>
        <taxon>Eukaryota</taxon>
        <taxon>Metazoa</taxon>
        <taxon>Chordata</taxon>
        <taxon>Craniata</taxon>
        <taxon>Vertebrata</taxon>
        <taxon>Euteleostomi</taxon>
        <taxon>Mammalia</taxon>
        <taxon>Eutheria</taxon>
        <taxon>Euarchontoglires</taxon>
        <taxon>Primates</taxon>
        <taxon>Haplorrhini</taxon>
        <taxon>Catarrhini</taxon>
        <taxon>Hominidae</taxon>
        <taxon>Homo</taxon>
    </lineage>
</organism>